<sequence length="201" mass="21937">MVRRFCNGAVALGIALTACAAFPRAIMAIDLSRFYGHINTKRSDACHPYEPFKCPGDGLCISIQYLCDGAPDCQDGYDEDSRLCTAAKRPPVEETATFLQSLLASHGPNYLEKLFGNKARDTLKPLGGVEKVAIALSESQTIEDFGAALHLMRSDLEHLRSVFMAVENGDLGMLKSIGIKDSELGDVKFFLEKLVKTGFLD</sequence>
<accession>E2AX35</accession>
<keyword id="KW-0165">Cleavage on pair of basic residues</keyword>
<keyword id="KW-0903">Direct protein sequencing</keyword>
<keyword id="KW-1015">Disulfide bond</keyword>
<keyword id="KW-0527">Neuropeptide</keyword>
<keyword id="KW-1185">Reference proteome</keyword>
<keyword id="KW-0964">Secreted</keyword>
<keyword id="KW-0732">Signal</keyword>
<gene>
    <name evidence="6" type="ORF">EAG_01737</name>
</gene>
<organism>
    <name type="scientific">Camponotus floridanus</name>
    <name type="common">Florida carpenter ant</name>
    <dbReference type="NCBI Taxonomy" id="104421"/>
    <lineage>
        <taxon>Eukaryota</taxon>
        <taxon>Metazoa</taxon>
        <taxon>Ecdysozoa</taxon>
        <taxon>Arthropoda</taxon>
        <taxon>Hexapoda</taxon>
        <taxon>Insecta</taxon>
        <taxon>Pterygota</taxon>
        <taxon>Neoptera</taxon>
        <taxon>Endopterygota</taxon>
        <taxon>Hymenoptera</taxon>
        <taxon>Apocrita</taxon>
        <taxon>Aculeata</taxon>
        <taxon>Formicoidea</taxon>
        <taxon>Formicidae</taxon>
        <taxon>Formicinae</taxon>
        <taxon>Camponotus</taxon>
    </lineage>
</organism>
<protein>
    <recommendedName>
        <fullName evidence="5">IDLSRF-like peptide</fullName>
    </recommendedName>
</protein>
<evidence type="ECO:0000255" key="1"/>
<evidence type="ECO:0000255" key="2">
    <source>
        <dbReference type="PROSITE-ProRule" id="PRU00124"/>
    </source>
</evidence>
<evidence type="ECO:0000269" key="3">
    <source>
    </source>
</evidence>
<evidence type="ECO:0000305" key="4"/>
<evidence type="ECO:0000305" key="5">
    <source>
    </source>
</evidence>
<evidence type="ECO:0000312" key="6">
    <source>
        <dbReference type="EMBL" id="EFN61985.1"/>
    </source>
</evidence>
<feature type="signal peptide" evidence="1">
    <location>
        <begin position="1"/>
        <end position="28"/>
    </location>
</feature>
<feature type="peptide" id="PRO_0000434253" description="IDLSRF-like peptide" evidence="3">
    <location>
        <begin position="29"/>
        <end position="40"/>
    </location>
</feature>
<feature type="propeptide" id="PRO_0000434254" evidence="5">
    <location>
        <begin position="43"/>
        <end position="201"/>
    </location>
</feature>
<feature type="domain" description="LDL-receptor class A" evidence="2">
    <location>
        <begin position="45"/>
        <end position="85"/>
    </location>
</feature>
<feature type="disulfide bond" evidence="2">
    <location>
        <begin position="46"/>
        <end position="60"/>
    </location>
</feature>
<feature type="disulfide bond" evidence="2">
    <location>
        <begin position="54"/>
        <end position="73"/>
    </location>
</feature>
<feature type="disulfide bond" evidence="2">
    <location>
        <begin position="67"/>
        <end position="84"/>
    </location>
</feature>
<name>PROH4_CAMFO</name>
<proteinExistence type="evidence at protein level"/>
<comment type="subcellular location">
    <subcellularLocation>
        <location evidence="5">Secreted</location>
    </subcellularLocation>
</comment>
<comment type="tissue specificity">
    <text evidence="3">Expressed in central brain, antennal and optical lobes, in gnathal, thoracic and abdominal ganglia and in the retrocerebral complex (at protein level).</text>
</comment>
<comment type="mass spectrometry" mass="1435.73" method="MALDI" evidence="3">
    <text>IDLSRF-like peptide.</text>
</comment>
<reference key="1">
    <citation type="journal article" date="2010" name="Science">
        <title>Genomic comparison of the ants Camponotus floridanus and Harpegnathos saltator.</title>
        <authorList>
            <person name="Bonasio R."/>
            <person name="Zhang G."/>
            <person name="Ye C."/>
            <person name="Mutti N.S."/>
            <person name="Fang X."/>
            <person name="Qin N."/>
            <person name="Donahue G."/>
            <person name="Yang P."/>
            <person name="Li Q."/>
            <person name="Li C."/>
            <person name="Zhang P."/>
            <person name="Huang Z."/>
            <person name="Berger S.L."/>
            <person name="Reinberg D."/>
            <person name="Wang J."/>
            <person name="Liebig J."/>
        </authorList>
    </citation>
    <scope>NUCLEOTIDE SEQUENCE [LARGE SCALE GENOMIC DNA]</scope>
</reference>
<reference evidence="4" key="2">
    <citation type="journal article" date="2015" name="J. Proteome Res.">
        <title>Neuropeptidomics of the carpenter ant Camponotus floridanus.</title>
        <authorList>
            <person name="Schmitt F."/>
            <person name="Vanselow J.T."/>
            <person name="Schlosser A."/>
            <person name="Kahnt J."/>
            <person name="Roessler W."/>
            <person name="Wegener C."/>
        </authorList>
    </citation>
    <scope>PROTEIN SEQUENCE OF 29-40</scope>
    <scope>TISSUE SPECIFICITY</scope>
    <scope>MASS SPECTROMETRY</scope>
    <scope>IDENTIFICATION BY MASS SPECTROMETRY</scope>
</reference>
<dbReference type="EMBL" id="GL443520">
    <property type="protein sequence ID" value="EFN61985.1"/>
    <property type="molecule type" value="Genomic_DNA"/>
</dbReference>
<dbReference type="SMR" id="E2AX35"/>
<dbReference type="EnsemblMetazoa" id="XM_011267297.3">
    <property type="protein sequence ID" value="XP_011265599.1"/>
    <property type="gene ID" value="LOC105256978"/>
</dbReference>
<dbReference type="KEGG" id="cfo:105256978"/>
<dbReference type="OMA" id="GICISIQ"/>
<dbReference type="OrthoDB" id="6239681at2759"/>
<dbReference type="Proteomes" id="UP000000311">
    <property type="component" value="Unassembled WGS sequence"/>
</dbReference>
<dbReference type="GO" id="GO:0005576">
    <property type="term" value="C:extracellular region"/>
    <property type="evidence" value="ECO:0007669"/>
    <property type="project" value="UniProtKB-SubCell"/>
</dbReference>
<dbReference type="GO" id="GO:0007218">
    <property type="term" value="P:neuropeptide signaling pathway"/>
    <property type="evidence" value="ECO:0007669"/>
    <property type="project" value="UniProtKB-KW"/>
</dbReference>
<dbReference type="CDD" id="cd00112">
    <property type="entry name" value="LDLa"/>
    <property type="match status" value="1"/>
</dbReference>
<dbReference type="Gene3D" id="2.40.128.620">
    <property type="match status" value="1"/>
</dbReference>
<dbReference type="InterPro" id="IPR053103">
    <property type="entry name" value="IDLSRF-like_peptide"/>
</dbReference>
<dbReference type="InterPro" id="IPR036055">
    <property type="entry name" value="LDL_receptor-like_sf"/>
</dbReference>
<dbReference type="InterPro" id="IPR023415">
    <property type="entry name" value="LDLR_class-A_CS"/>
</dbReference>
<dbReference type="InterPro" id="IPR002172">
    <property type="entry name" value="LDrepeatLR_classA_rpt"/>
</dbReference>
<dbReference type="PANTHER" id="PTHR20967">
    <property type="entry name" value="PROHORMONE-4"/>
    <property type="match status" value="1"/>
</dbReference>
<dbReference type="PANTHER" id="PTHR20967:SF0">
    <property type="entry name" value="PROHORMONE-4"/>
    <property type="match status" value="1"/>
</dbReference>
<dbReference type="Pfam" id="PF00057">
    <property type="entry name" value="Ldl_recept_a"/>
    <property type="match status" value="1"/>
</dbReference>
<dbReference type="SMART" id="SM00192">
    <property type="entry name" value="LDLa"/>
    <property type="match status" value="1"/>
</dbReference>
<dbReference type="SUPFAM" id="SSF57424">
    <property type="entry name" value="LDL receptor-like module"/>
    <property type="match status" value="1"/>
</dbReference>
<dbReference type="PROSITE" id="PS01209">
    <property type="entry name" value="LDLRA_1"/>
    <property type="match status" value="1"/>
</dbReference>
<dbReference type="PROSITE" id="PS50068">
    <property type="entry name" value="LDLRA_2"/>
    <property type="match status" value="1"/>
</dbReference>